<protein>
    <recommendedName>
        <fullName evidence="1">Glycerol-3-phosphate acyltransferase</fullName>
    </recommendedName>
    <alternativeName>
        <fullName evidence="1">Acyl-PO4 G3P acyltransferase</fullName>
    </alternativeName>
    <alternativeName>
        <fullName evidence="1">Acyl-phosphate--glycerol-3-phosphate acyltransferase</fullName>
    </alternativeName>
    <alternativeName>
        <fullName evidence="1">G3P acyltransferase</fullName>
        <shortName evidence="1">GPAT</shortName>
        <ecNumber evidence="1">2.3.1.275</ecNumber>
    </alternativeName>
    <alternativeName>
        <fullName evidence="1">Lysophosphatidic acid synthase</fullName>
        <shortName evidence="1">LPA synthase</shortName>
    </alternativeName>
</protein>
<name>PLSY_BRUME</name>
<reference key="1">
    <citation type="journal article" date="2002" name="Proc. Natl. Acad. Sci. U.S.A.">
        <title>The genome sequence of the facultative intracellular pathogen Brucella melitensis.</title>
        <authorList>
            <person name="DelVecchio V.G."/>
            <person name="Kapatral V."/>
            <person name="Redkar R.J."/>
            <person name="Patra G."/>
            <person name="Mujer C."/>
            <person name="Los T."/>
            <person name="Ivanova N."/>
            <person name="Anderson I."/>
            <person name="Bhattacharyya A."/>
            <person name="Lykidis A."/>
            <person name="Reznik G."/>
            <person name="Jablonski L."/>
            <person name="Larsen N."/>
            <person name="D'Souza M."/>
            <person name="Bernal A."/>
            <person name="Mazur M."/>
            <person name="Goltsman E."/>
            <person name="Selkov E."/>
            <person name="Elzer P.H."/>
            <person name="Hagius S."/>
            <person name="O'Callaghan D."/>
            <person name="Letesson J.-J."/>
            <person name="Haselkorn R."/>
            <person name="Kyrpides N.C."/>
            <person name="Overbeek R."/>
        </authorList>
    </citation>
    <scope>NUCLEOTIDE SEQUENCE [LARGE SCALE GENOMIC DNA]</scope>
    <source>
        <strain>ATCC 23456 / CCUG 17765 / NCTC 10094 / 16M</strain>
    </source>
</reference>
<comment type="function">
    <text evidence="1">Catalyzes the transfer of an acyl group from acyl-phosphate (acyl-PO(4)) to glycerol-3-phosphate (G3P) to form lysophosphatidic acid (LPA). This enzyme utilizes acyl-phosphate as fatty acyl donor, but not acyl-CoA or acyl-ACP.</text>
</comment>
<comment type="catalytic activity">
    <reaction evidence="1">
        <text>an acyl phosphate + sn-glycerol 3-phosphate = a 1-acyl-sn-glycero-3-phosphate + phosphate</text>
        <dbReference type="Rhea" id="RHEA:34075"/>
        <dbReference type="ChEBI" id="CHEBI:43474"/>
        <dbReference type="ChEBI" id="CHEBI:57597"/>
        <dbReference type="ChEBI" id="CHEBI:57970"/>
        <dbReference type="ChEBI" id="CHEBI:59918"/>
        <dbReference type="EC" id="2.3.1.275"/>
    </reaction>
</comment>
<comment type="pathway">
    <text evidence="1">Lipid metabolism; phospholipid metabolism.</text>
</comment>
<comment type="subunit">
    <text evidence="1">Probably interacts with PlsX.</text>
</comment>
<comment type="subcellular location">
    <subcellularLocation>
        <location evidence="1">Cell inner membrane</location>
        <topology evidence="1">Multi-pass membrane protein</topology>
    </subcellularLocation>
</comment>
<comment type="similarity">
    <text evidence="1">Belongs to the PlsY family.</text>
</comment>
<dbReference type="EC" id="2.3.1.275" evidence="1"/>
<dbReference type="EMBL" id="AE008918">
    <property type="protein sequence ID" value="AAL53910.1"/>
    <property type="molecule type" value="Genomic_DNA"/>
</dbReference>
<dbReference type="PIR" id="AC3593">
    <property type="entry name" value="AC3593"/>
</dbReference>
<dbReference type="RefSeq" id="WP_004681904.1">
    <property type="nucleotide sequence ID" value="NZ_GG703779.1"/>
</dbReference>
<dbReference type="SMR" id="Q8YC64"/>
<dbReference type="GeneID" id="29595027"/>
<dbReference type="KEGG" id="bme:BMEII0668"/>
<dbReference type="eggNOG" id="COG0344">
    <property type="taxonomic scope" value="Bacteria"/>
</dbReference>
<dbReference type="PhylomeDB" id="Q8YC64"/>
<dbReference type="UniPathway" id="UPA00085"/>
<dbReference type="Proteomes" id="UP000000419">
    <property type="component" value="Chromosome II"/>
</dbReference>
<dbReference type="GO" id="GO:0005886">
    <property type="term" value="C:plasma membrane"/>
    <property type="evidence" value="ECO:0007669"/>
    <property type="project" value="UniProtKB-SubCell"/>
</dbReference>
<dbReference type="GO" id="GO:0043772">
    <property type="term" value="F:acyl-phosphate glycerol-3-phosphate acyltransferase activity"/>
    <property type="evidence" value="ECO:0007669"/>
    <property type="project" value="UniProtKB-UniRule"/>
</dbReference>
<dbReference type="GO" id="GO:0008654">
    <property type="term" value="P:phospholipid biosynthetic process"/>
    <property type="evidence" value="ECO:0007669"/>
    <property type="project" value="UniProtKB-UniRule"/>
</dbReference>
<dbReference type="HAMAP" id="MF_01043">
    <property type="entry name" value="PlsY"/>
    <property type="match status" value="1"/>
</dbReference>
<dbReference type="InterPro" id="IPR003811">
    <property type="entry name" value="G3P_acylTferase_PlsY"/>
</dbReference>
<dbReference type="NCBIfam" id="TIGR00023">
    <property type="entry name" value="glycerol-3-phosphate 1-O-acyltransferase PlsY"/>
    <property type="match status" value="1"/>
</dbReference>
<dbReference type="PANTHER" id="PTHR30309:SF0">
    <property type="entry name" value="GLYCEROL-3-PHOSPHATE ACYLTRANSFERASE-RELATED"/>
    <property type="match status" value="1"/>
</dbReference>
<dbReference type="PANTHER" id="PTHR30309">
    <property type="entry name" value="INNER MEMBRANE PROTEIN YGIH"/>
    <property type="match status" value="1"/>
</dbReference>
<dbReference type="Pfam" id="PF02660">
    <property type="entry name" value="G3P_acyltransf"/>
    <property type="match status" value="1"/>
</dbReference>
<dbReference type="SMART" id="SM01207">
    <property type="entry name" value="G3P_acyltransf"/>
    <property type="match status" value="1"/>
</dbReference>
<feature type="chain" id="PRO_0000188337" description="Glycerol-3-phosphate acyltransferase">
    <location>
        <begin position="1"/>
        <end position="201"/>
    </location>
</feature>
<feature type="transmembrane region" description="Helical" evidence="1">
    <location>
        <begin position="10"/>
        <end position="30"/>
    </location>
</feature>
<feature type="transmembrane region" description="Helical" evidence="1">
    <location>
        <begin position="60"/>
        <end position="80"/>
    </location>
</feature>
<feature type="transmembrane region" description="Helical" evidence="1">
    <location>
        <begin position="86"/>
        <end position="106"/>
    </location>
</feature>
<feature type="transmembrane region" description="Helical" evidence="1">
    <location>
        <begin position="116"/>
        <end position="136"/>
    </location>
</feature>
<feature type="transmembrane region" description="Helical" evidence="1">
    <location>
        <begin position="166"/>
        <end position="186"/>
    </location>
</feature>
<gene>
    <name evidence="1" type="primary">plsY</name>
    <name type="ordered locus">BMEII0668</name>
</gene>
<sequence>MAEPGFFNAMLIGALIFGYVLGSIPFGLILTRLAGLGDVRAIGSGNIGATNVLRTGNKKLAAATLILDALKGTAAALIAAHFGQNAAIAAGFGAFIGHLFPVWIGFKGGKGVATYLGVLIGLAWAGALVFAAAWIVTALLARYSSLSALVASLVVPIALYSRGNQALAALFAIMTVIVFIKHRANISRLLNGTESKIGAKG</sequence>
<proteinExistence type="inferred from homology"/>
<accession>Q8YC64</accession>
<evidence type="ECO:0000255" key="1">
    <source>
        <dbReference type="HAMAP-Rule" id="MF_01043"/>
    </source>
</evidence>
<keyword id="KW-0997">Cell inner membrane</keyword>
<keyword id="KW-1003">Cell membrane</keyword>
<keyword id="KW-0444">Lipid biosynthesis</keyword>
<keyword id="KW-0443">Lipid metabolism</keyword>
<keyword id="KW-0472">Membrane</keyword>
<keyword id="KW-0594">Phospholipid biosynthesis</keyword>
<keyword id="KW-1208">Phospholipid metabolism</keyword>
<keyword id="KW-0808">Transferase</keyword>
<keyword id="KW-0812">Transmembrane</keyword>
<keyword id="KW-1133">Transmembrane helix</keyword>
<organism>
    <name type="scientific">Brucella melitensis biotype 1 (strain ATCC 23456 / CCUG 17765 / NCTC 10094 / 16M)</name>
    <dbReference type="NCBI Taxonomy" id="224914"/>
    <lineage>
        <taxon>Bacteria</taxon>
        <taxon>Pseudomonadati</taxon>
        <taxon>Pseudomonadota</taxon>
        <taxon>Alphaproteobacteria</taxon>
        <taxon>Hyphomicrobiales</taxon>
        <taxon>Brucellaceae</taxon>
        <taxon>Brucella/Ochrobactrum group</taxon>
        <taxon>Brucella</taxon>
    </lineage>
</organism>